<protein>
    <recommendedName>
        <fullName evidence="1">Arginine--tRNA ligase</fullName>
        <ecNumber evidence="1">6.1.1.19</ecNumber>
    </recommendedName>
    <alternativeName>
        <fullName evidence="1">Arginyl-tRNA synthetase</fullName>
        <shortName evidence="1">ArgRS</shortName>
    </alternativeName>
</protein>
<reference key="1">
    <citation type="journal article" date="2009" name="Genome Biol.">
        <title>Genomic and genetic analyses of diversity and plant interactions of Pseudomonas fluorescens.</title>
        <authorList>
            <person name="Silby M.W."/>
            <person name="Cerdeno-Tarraga A.M."/>
            <person name="Vernikos G.S."/>
            <person name="Giddens S.R."/>
            <person name="Jackson R.W."/>
            <person name="Preston G.M."/>
            <person name="Zhang X.-X."/>
            <person name="Moon C.D."/>
            <person name="Gehrig S.M."/>
            <person name="Godfrey S.A.C."/>
            <person name="Knight C.G."/>
            <person name="Malone J.G."/>
            <person name="Robinson Z."/>
            <person name="Spiers A.J."/>
            <person name="Harris S."/>
            <person name="Challis G.L."/>
            <person name="Yaxley A.M."/>
            <person name="Harris D."/>
            <person name="Seeger K."/>
            <person name="Murphy L."/>
            <person name="Rutter S."/>
            <person name="Squares R."/>
            <person name="Quail M.A."/>
            <person name="Saunders E."/>
            <person name="Mavromatis K."/>
            <person name="Brettin T.S."/>
            <person name="Bentley S.D."/>
            <person name="Hothersall J."/>
            <person name="Stephens E."/>
            <person name="Thomas C.M."/>
            <person name="Parkhill J."/>
            <person name="Levy S.B."/>
            <person name="Rainey P.B."/>
            <person name="Thomson N.R."/>
        </authorList>
    </citation>
    <scope>NUCLEOTIDE SEQUENCE [LARGE SCALE GENOMIC DNA]</scope>
    <source>
        <strain>Pf0-1</strain>
    </source>
</reference>
<sequence length="578" mass="63659">MKDTIRQLIQQALTQLVNEGVLPEGLTPAIQVENARDKTHGDFASNIAMMLAKPAGMKPRDLAEKIIAALPADENVTKAEIAGPGFINFFQNTQALASRLDAALADAHVGVRKAGPAQRTVVDLSAPNLAKEMHVGHLRSTIIGDGVARVLEFLGDTVIRQNHVGDWGTQFGMLMAYLQENPITSDELSDLENFYRAAKQRFDESPEFADRARGLVVKLQAGDAECLALWTKFKDISLSHCQKIYELLNVKLTMADVMGESAYNDDLINVVNDLKAAGMLVESNGAQCVFLDEFKNAEGEPLPVIIVKADGGYLYATTDLAAVRYRSGKLKADRALYFVDQRQALHFQQVFAVARKAGFVTHPMEMEHMGFGTMNGADGRPFKTRDGGTVKLIDLLTEAQERAYALVKEKNPTLADDELRSIAKVVGIGAVKYADLSKHRTSDYSFNFDQMLNLEGNTAPYLLYAYTRVAGVFRKLEKEYSEVDGQIVLEAPQEHDLAAKLAQFGEVLNNVAEKGTPHTLCTYLYEVAGLFSSFYEKCPILTAETPAQMQSRLRLAALTGRTLKQGLELLGLETLERM</sequence>
<evidence type="ECO:0000255" key="1">
    <source>
        <dbReference type="HAMAP-Rule" id="MF_00123"/>
    </source>
</evidence>
<dbReference type="EC" id="6.1.1.19" evidence="1"/>
<dbReference type="EMBL" id="CP000094">
    <property type="protein sequence ID" value="ABA72143.1"/>
    <property type="molecule type" value="Genomic_DNA"/>
</dbReference>
<dbReference type="RefSeq" id="WP_011332071.1">
    <property type="nucleotide sequence ID" value="NC_007492.2"/>
</dbReference>
<dbReference type="SMR" id="Q3KJB3"/>
<dbReference type="KEGG" id="pfo:Pfl01_0399"/>
<dbReference type="eggNOG" id="COG0018">
    <property type="taxonomic scope" value="Bacteria"/>
</dbReference>
<dbReference type="HOGENOM" id="CLU_006406_5_1_6"/>
<dbReference type="Proteomes" id="UP000002704">
    <property type="component" value="Chromosome"/>
</dbReference>
<dbReference type="GO" id="GO:0005737">
    <property type="term" value="C:cytoplasm"/>
    <property type="evidence" value="ECO:0007669"/>
    <property type="project" value="UniProtKB-SubCell"/>
</dbReference>
<dbReference type="GO" id="GO:0004814">
    <property type="term" value="F:arginine-tRNA ligase activity"/>
    <property type="evidence" value="ECO:0007669"/>
    <property type="project" value="UniProtKB-UniRule"/>
</dbReference>
<dbReference type="GO" id="GO:0005524">
    <property type="term" value="F:ATP binding"/>
    <property type="evidence" value="ECO:0007669"/>
    <property type="project" value="UniProtKB-UniRule"/>
</dbReference>
<dbReference type="GO" id="GO:0006420">
    <property type="term" value="P:arginyl-tRNA aminoacylation"/>
    <property type="evidence" value="ECO:0007669"/>
    <property type="project" value="UniProtKB-UniRule"/>
</dbReference>
<dbReference type="CDD" id="cd00671">
    <property type="entry name" value="ArgRS_core"/>
    <property type="match status" value="1"/>
</dbReference>
<dbReference type="FunFam" id="3.30.1360.70:FF:000003">
    <property type="entry name" value="Arginine--tRNA ligase"/>
    <property type="match status" value="1"/>
</dbReference>
<dbReference type="FunFam" id="3.40.50.620:FF:000030">
    <property type="entry name" value="Arginine--tRNA ligase"/>
    <property type="match status" value="1"/>
</dbReference>
<dbReference type="FunFam" id="1.10.730.10:FF:000006">
    <property type="entry name" value="Arginyl-tRNA synthetase 2, mitochondrial"/>
    <property type="match status" value="1"/>
</dbReference>
<dbReference type="Gene3D" id="3.30.1360.70">
    <property type="entry name" value="Arginyl tRNA synthetase N-terminal domain"/>
    <property type="match status" value="1"/>
</dbReference>
<dbReference type="Gene3D" id="3.40.50.620">
    <property type="entry name" value="HUPs"/>
    <property type="match status" value="1"/>
</dbReference>
<dbReference type="Gene3D" id="1.10.730.10">
    <property type="entry name" value="Isoleucyl-tRNA Synthetase, Domain 1"/>
    <property type="match status" value="1"/>
</dbReference>
<dbReference type="HAMAP" id="MF_00123">
    <property type="entry name" value="Arg_tRNA_synth"/>
    <property type="match status" value="1"/>
</dbReference>
<dbReference type="InterPro" id="IPR001412">
    <property type="entry name" value="aa-tRNA-synth_I_CS"/>
</dbReference>
<dbReference type="InterPro" id="IPR001278">
    <property type="entry name" value="Arg-tRNA-ligase"/>
</dbReference>
<dbReference type="InterPro" id="IPR005148">
    <property type="entry name" value="Arg-tRNA-synth_N"/>
</dbReference>
<dbReference type="InterPro" id="IPR036695">
    <property type="entry name" value="Arg-tRNA-synth_N_sf"/>
</dbReference>
<dbReference type="InterPro" id="IPR035684">
    <property type="entry name" value="ArgRS_core"/>
</dbReference>
<dbReference type="InterPro" id="IPR008909">
    <property type="entry name" value="DALR_anticod-bd"/>
</dbReference>
<dbReference type="InterPro" id="IPR014729">
    <property type="entry name" value="Rossmann-like_a/b/a_fold"/>
</dbReference>
<dbReference type="InterPro" id="IPR009080">
    <property type="entry name" value="tRNAsynth_Ia_anticodon-bd"/>
</dbReference>
<dbReference type="NCBIfam" id="TIGR00456">
    <property type="entry name" value="argS"/>
    <property type="match status" value="1"/>
</dbReference>
<dbReference type="PANTHER" id="PTHR11956:SF5">
    <property type="entry name" value="ARGININE--TRNA LIGASE, CYTOPLASMIC"/>
    <property type="match status" value="1"/>
</dbReference>
<dbReference type="PANTHER" id="PTHR11956">
    <property type="entry name" value="ARGINYL-TRNA SYNTHETASE"/>
    <property type="match status" value="1"/>
</dbReference>
<dbReference type="Pfam" id="PF03485">
    <property type="entry name" value="Arg_tRNA_synt_N"/>
    <property type="match status" value="1"/>
</dbReference>
<dbReference type="Pfam" id="PF05746">
    <property type="entry name" value="DALR_1"/>
    <property type="match status" value="1"/>
</dbReference>
<dbReference type="Pfam" id="PF00750">
    <property type="entry name" value="tRNA-synt_1d"/>
    <property type="match status" value="1"/>
</dbReference>
<dbReference type="PRINTS" id="PR01038">
    <property type="entry name" value="TRNASYNTHARG"/>
</dbReference>
<dbReference type="SMART" id="SM01016">
    <property type="entry name" value="Arg_tRNA_synt_N"/>
    <property type="match status" value="1"/>
</dbReference>
<dbReference type="SMART" id="SM00836">
    <property type="entry name" value="DALR_1"/>
    <property type="match status" value="1"/>
</dbReference>
<dbReference type="SUPFAM" id="SSF47323">
    <property type="entry name" value="Anticodon-binding domain of a subclass of class I aminoacyl-tRNA synthetases"/>
    <property type="match status" value="1"/>
</dbReference>
<dbReference type="SUPFAM" id="SSF55190">
    <property type="entry name" value="Arginyl-tRNA synthetase (ArgRS), N-terminal 'additional' domain"/>
    <property type="match status" value="1"/>
</dbReference>
<dbReference type="SUPFAM" id="SSF52374">
    <property type="entry name" value="Nucleotidylyl transferase"/>
    <property type="match status" value="1"/>
</dbReference>
<dbReference type="PROSITE" id="PS00178">
    <property type="entry name" value="AA_TRNA_LIGASE_I"/>
    <property type="match status" value="1"/>
</dbReference>
<organism>
    <name type="scientific">Pseudomonas fluorescens (strain Pf0-1)</name>
    <dbReference type="NCBI Taxonomy" id="205922"/>
    <lineage>
        <taxon>Bacteria</taxon>
        <taxon>Pseudomonadati</taxon>
        <taxon>Pseudomonadota</taxon>
        <taxon>Gammaproteobacteria</taxon>
        <taxon>Pseudomonadales</taxon>
        <taxon>Pseudomonadaceae</taxon>
        <taxon>Pseudomonas</taxon>
    </lineage>
</organism>
<feature type="chain" id="PRO_0000242070" description="Arginine--tRNA ligase">
    <location>
        <begin position="1"/>
        <end position="578"/>
    </location>
</feature>
<feature type="short sequence motif" description="'HIGH' region">
    <location>
        <begin position="127"/>
        <end position="137"/>
    </location>
</feature>
<comment type="catalytic activity">
    <reaction evidence="1">
        <text>tRNA(Arg) + L-arginine + ATP = L-arginyl-tRNA(Arg) + AMP + diphosphate</text>
        <dbReference type="Rhea" id="RHEA:20301"/>
        <dbReference type="Rhea" id="RHEA-COMP:9658"/>
        <dbReference type="Rhea" id="RHEA-COMP:9673"/>
        <dbReference type="ChEBI" id="CHEBI:30616"/>
        <dbReference type="ChEBI" id="CHEBI:32682"/>
        <dbReference type="ChEBI" id="CHEBI:33019"/>
        <dbReference type="ChEBI" id="CHEBI:78442"/>
        <dbReference type="ChEBI" id="CHEBI:78513"/>
        <dbReference type="ChEBI" id="CHEBI:456215"/>
        <dbReference type="EC" id="6.1.1.19"/>
    </reaction>
</comment>
<comment type="subunit">
    <text evidence="1">Monomer.</text>
</comment>
<comment type="subcellular location">
    <subcellularLocation>
        <location evidence="1">Cytoplasm</location>
    </subcellularLocation>
</comment>
<comment type="similarity">
    <text evidence="1">Belongs to the class-I aminoacyl-tRNA synthetase family.</text>
</comment>
<proteinExistence type="inferred from homology"/>
<name>SYR_PSEPF</name>
<keyword id="KW-0030">Aminoacyl-tRNA synthetase</keyword>
<keyword id="KW-0067">ATP-binding</keyword>
<keyword id="KW-0963">Cytoplasm</keyword>
<keyword id="KW-0436">Ligase</keyword>
<keyword id="KW-0547">Nucleotide-binding</keyword>
<keyword id="KW-0648">Protein biosynthesis</keyword>
<accession>Q3KJB3</accession>
<gene>
    <name evidence="1" type="primary">argS</name>
    <name type="ordered locus">Pfl01_0399</name>
</gene>